<dbReference type="EC" id="2.3.1.20" evidence="1"/>
<dbReference type="EMBL" id="AE000516">
    <property type="protein sequence ID" value="AAK46861.1"/>
    <property type="molecule type" value="Genomic_DNA"/>
</dbReference>
<dbReference type="PIR" id="C70868">
    <property type="entry name" value="C70868"/>
</dbReference>
<dbReference type="RefSeq" id="WP_003899345.1">
    <property type="nucleotide sequence ID" value="NZ_KK341227.1"/>
</dbReference>
<dbReference type="SMR" id="P9WKB2"/>
<dbReference type="KEGG" id="mtc:MT2557"/>
<dbReference type="PATRIC" id="fig|83331.31.peg.2758"/>
<dbReference type="HOGENOM" id="CLU_024186_2_0_11"/>
<dbReference type="UniPathway" id="UPA00282"/>
<dbReference type="Proteomes" id="UP000001020">
    <property type="component" value="Chromosome"/>
</dbReference>
<dbReference type="GO" id="GO:0005886">
    <property type="term" value="C:plasma membrane"/>
    <property type="evidence" value="ECO:0007669"/>
    <property type="project" value="TreeGrafter"/>
</dbReference>
<dbReference type="GO" id="GO:0004144">
    <property type="term" value="F:diacylglycerol O-acyltransferase activity"/>
    <property type="evidence" value="ECO:0007669"/>
    <property type="project" value="UniProtKB-EC"/>
</dbReference>
<dbReference type="GO" id="GO:0051701">
    <property type="term" value="P:biological process involved in interaction with host"/>
    <property type="evidence" value="ECO:0007669"/>
    <property type="project" value="TreeGrafter"/>
</dbReference>
<dbReference type="GO" id="GO:0006071">
    <property type="term" value="P:glycerol metabolic process"/>
    <property type="evidence" value="ECO:0007669"/>
    <property type="project" value="UniProtKB-KW"/>
</dbReference>
<dbReference type="GO" id="GO:0001666">
    <property type="term" value="P:response to hypoxia"/>
    <property type="evidence" value="ECO:0007669"/>
    <property type="project" value="TreeGrafter"/>
</dbReference>
<dbReference type="GO" id="GO:0071731">
    <property type="term" value="P:response to nitric oxide"/>
    <property type="evidence" value="ECO:0007669"/>
    <property type="project" value="TreeGrafter"/>
</dbReference>
<dbReference type="GO" id="GO:0019432">
    <property type="term" value="P:triglyceride biosynthetic process"/>
    <property type="evidence" value="ECO:0007669"/>
    <property type="project" value="UniProtKB-UniPathway"/>
</dbReference>
<dbReference type="Gene3D" id="3.30.559.10">
    <property type="entry name" value="Chloramphenicol acetyltransferase-like domain"/>
    <property type="match status" value="1"/>
</dbReference>
<dbReference type="InterPro" id="IPR014292">
    <property type="entry name" value="Acyl_transf_WS/DGAT"/>
</dbReference>
<dbReference type="InterPro" id="IPR023213">
    <property type="entry name" value="CAT-like_dom_sf"/>
</dbReference>
<dbReference type="InterPro" id="IPR045034">
    <property type="entry name" value="O-acyltransferase_WSD1-like"/>
</dbReference>
<dbReference type="InterPro" id="IPR009721">
    <property type="entry name" value="O-acyltransferase_WSD1_C"/>
</dbReference>
<dbReference type="InterPro" id="IPR004255">
    <property type="entry name" value="O-acyltransferase_WSD1_N"/>
</dbReference>
<dbReference type="NCBIfam" id="TIGR02946">
    <property type="entry name" value="acyl_WS_DGAT"/>
    <property type="match status" value="1"/>
</dbReference>
<dbReference type="PANTHER" id="PTHR31650">
    <property type="entry name" value="O-ACYLTRANSFERASE (WSD1-LIKE) FAMILY PROTEIN"/>
    <property type="match status" value="1"/>
</dbReference>
<dbReference type="PANTHER" id="PTHR31650:SF1">
    <property type="entry name" value="WAX ESTER SYNTHASE_DIACYLGLYCEROL ACYLTRANSFERASE 4-RELATED"/>
    <property type="match status" value="1"/>
</dbReference>
<dbReference type="Pfam" id="PF06974">
    <property type="entry name" value="WS_DGAT_C"/>
    <property type="match status" value="1"/>
</dbReference>
<dbReference type="Pfam" id="PF03007">
    <property type="entry name" value="WS_DGAT_cat"/>
    <property type="match status" value="1"/>
</dbReference>
<dbReference type="SUPFAM" id="SSF52777">
    <property type="entry name" value="CoA-dependent acyltransferases"/>
    <property type="match status" value="1"/>
</dbReference>
<keyword id="KW-0012">Acyltransferase</keyword>
<keyword id="KW-0319">Glycerol metabolism</keyword>
<keyword id="KW-0444">Lipid biosynthesis</keyword>
<keyword id="KW-0443">Lipid metabolism</keyword>
<keyword id="KW-1185">Reference proteome</keyword>
<keyword id="KW-0808">Transferase</keyword>
<protein>
    <recommendedName>
        <fullName>Putative diacyglycerol O-acyltransferase MT2557</fullName>
        <ecNumber evidence="1">2.3.1.20</ecNumber>
    </recommendedName>
    <alternativeName>
        <fullName>Putative triacylglycerol synthase MT2557</fullName>
    </alternativeName>
</protein>
<proteinExistence type="inferred from homology"/>
<comment type="catalytic activity">
    <reaction evidence="1">
        <text>an acyl-CoA + a 1,2-diacyl-sn-glycerol = a triacyl-sn-glycerol + CoA</text>
        <dbReference type="Rhea" id="RHEA:10868"/>
        <dbReference type="ChEBI" id="CHEBI:17815"/>
        <dbReference type="ChEBI" id="CHEBI:57287"/>
        <dbReference type="ChEBI" id="CHEBI:58342"/>
        <dbReference type="ChEBI" id="CHEBI:64615"/>
        <dbReference type="EC" id="2.3.1.20"/>
    </reaction>
</comment>
<comment type="pathway">
    <text>Glycerolipid metabolism; triacylglycerol biosynthesis.</text>
</comment>
<comment type="similarity">
    <text evidence="3">Belongs to the long-chain O-acyltransferase family.</text>
</comment>
<gene>
    <name type="ordered locus">MT2557</name>
</gene>
<reference key="1">
    <citation type="journal article" date="2002" name="J. Bacteriol.">
        <title>Whole-genome comparison of Mycobacterium tuberculosis clinical and laboratory strains.</title>
        <authorList>
            <person name="Fleischmann R.D."/>
            <person name="Alland D."/>
            <person name="Eisen J.A."/>
            <person name="Carpenter L."/>
            <person name="White O."/>
            <person name="Peterson J.D."/>
            <person name="DeBoy R.T."/>
            <person name="Dodson R.J."/>
            <person name="Gwinn M.L."/>
            <person name="Haft D.H."/>
            <person name="Hickey E.K."/>
            <person name="Kolonay J.F."/>
            <person name="Nelson W.C."/>
            <person name="Umayam L.A."/>
            <person name="Ermolaeva M.D."/>
            <person name="Salzberg S.L."/>
            <person name="Delcher A."/>
            <person name="Utterback T.R."/>
            <person name="Weidman J.F."/>
            <person name="Khouri H.M."/>
            <person name="Gill J."/>
            <person name="Mikula A."/>
            <person name="Bishai W."/>
            <person name="Jacobs W.R. Jr."/>
            <person name="Venter J.C."/>
            <person name="Fraser C.M."/>
        </authorList>
    </citation>
    <scope>NUCLEOTIDE SEQUENCE [LARGE SCALE GENOMIC DNA]</scope>
    <source>
        <strain>CDC 1551 / Oshkosh</strain>
    </source>
</reference>
<feature type="chain" id="PRO_0000427684" description="Putative diacyglycerol O-acyltransferase MT2557">
    <location>
        <begin position="1"/>
        <end position="491"/>
    </location>
</feature>
<feature type="active site" description="Proton acceptor" evidence="2">
    <location>
        <position position="145"/>
    </location>
</feature>
<accession>P9WKB2</accession>
<accession>L0TCH6</accession>
<accession>O53209</accession>
<organism>
    <name type="scientific">Mycobacterium tuberculosis (strain CDC 1551 / Oshkosh)</name>
    <dbReference type="NCBI Taxonomy" id="83331"/>
    <lineage>
        <taxon>Bacteria</taxon>
        <taxon>Bacillati</taxon>
        <taxon>Actinomycetota</taxon>
        <taxon>Actinomycetes</taxon>
        <taxon>Mycobacteriales</taxon>
        <taxon>Mycobacteriaceae</taxon>
        <taxon>Mycobacterium</taxon>
        <taxon>Mycobacterium tuberculosis complex</taxon>
    </lineage>
</organism>
<name>Y2484_MYCTO</name>
<evidence type="ECO:0000250" key="1">
    <source>
        <dbReference type="UniProtKB" id="P9WKC9"/>
    </source>
</evidence>
<evidence type="ECO:0000255" key="2"/>
<evidence type="ECO:0000305" key="3"/>
<sequence>MAESGESPRLSDELGPVDYLMHRGEANPRTRSGIMALELLDGTPDWDRFRTRFENASRRVLRLRQKVVVPTLPTAAPRWVVDPDFNLDFHVRRVRVSGPATLREVLDLAEVILQSPLDISRPLWTATLVEGMADGRAAMLLHVSHAVTDGVGGVEMFAQIYDLERDPPPRSTPPQPIPEDLSPNDLMRRGINHLPIAVVGGVLDALSGAVSMAGRAVLEPVSTVSGILGYARSGIRVLNRAAEPSPLLRRRSLTTRTEAIDIRLADLHKAAKAGGGSINDAYLAGLCGALRRYHEALGVPISTLPMAVPVNLRAEGDAAGGNQFTGVNLAAPVGTIDPVARMKKIRAQMTQRRDEPAMNIIGSIAPVLSVLPTAVLEGITGSVIGSDVQASNVPVYPGDTYLAGAKILRQYGIGPLPGVAMMVVLISRGGWCTVTVRYDRASVRNDELFAQCLQAGFDEILALAGGPAPRVLPASFDTQGAGSVPRSVSGS</sequence>